<keyword id="KW-0067">ATP-binding</keyword>
<keyword id="KW-0131">Cell cycle</keyword>
<keyword id="KW-0132">Cell division</keyword>
<keyword id="KW-0133">Cell shape</keyword>
<keyword id="KW-0961">Cell wall biogenesis/degradation</keyword>
<keyword id="KW-0963">Cytoplasm</keyword>
<keyword id="KW-0436">Ligase</keyword>
<keyword id="KW-0547">Nucleotide-binding</keyword>
<keyword id="KW-0573">Peptidoglycan synthesis</keyword>
<keyword id="KW-1185">Reference proteome</keyword>
<reference key="1">
    <citation type="journal article" date="2006" name="Appl. Environ. Microbiol.">
        <title>Genome sequence of the chemolithoautotrophic nitrite-oxidizing bacterium Nitrobacter winogradskyi Nb-255.</title>
        <authorList>
            <person name="Starkenburg S.R."/>
            <person name="Chain P.S.G."/>
            <person name="Sayavedra-Soto L.A."/>
            <person name="Hauser L."/>
            <person name="Land M.L."/>
            <person name="Larimer F.W."/>
            <person name="Malfatti S.A."/>
            <person name="Klotz M.G."/>
            <person name="Bottomley P.J."/>
            <person name="Arp D.J."/>
            <person name="Hickey W.J."/>
        </authorList>
    </citation>
    <scope>NUCLEOTIDE SEQUENCE [LARGE SCALE GENOMIC DNA]</scope>
    <source>
        <strain>ATCC 25391 / DSM 10237 / CIP 104748 / NCIMB 11846 / Nb-255</strain>
    </source>
</reference>
<name>MURD_NITWN</name>
<evidence type="ECO:0000255" key="1">
    <source>
        <dbReference type="HAMAP-Rule" id="MF_00639"/>
    </source>
</evidence>
<feature type="chain" id="PRO_0000257207" description="UDP-N-acetylmuramoylalanine--D-glutamate ligase">
    <location>
        <begin position="1"/>
        <end position="466"/>
    </location>
</feature>
<feature type="binding site" evidence="1">
    <location>
        <begin position="121"/>
        <end position="127"/>
    </location>
    <ligand>
        <name>ATP</name>
        <dbReference type="ChEBI" id="CHEBI:30616"/>
    </ligand>
</feature>
<dbReference type="EC" id="6.3.2.9" evidence="1"/>
<dbReference type="EMBL" id="CP000115">
    <property type="protein sequence ID" value="ABA04311.1"/>
    <property type="molecule type" value="Genomic_DNA"/>
</dbReference>
<dbReference type="RefSeq" id="WP_011314345.1">
    <property type="nucleotide sequence ID" value="NC_007406.1"/>
</dbReference>
<dbReference type="SMR" id="Q3STT0"/>
<dbReference type="STRING" id="323098.Nwi_1049"/>
<dbReference type="KEGG" id="nwi:Nwi_1049"/>
<dbReference type="eggNOG" id="COG0771">
    <property type="taxonomic scope" value="Bacteria"/>
</dbReference>
<dbReference type="HOGENOM" id="CLU_032540_3_0_5"/>
<dbReference type="OrthoDB" id="9809796at2"/>
<dbReference type="UniPathway" id="UPA00219"/>
<dbReference type="Proteomes" id="UP000002531">
    <property type="component" value="Chromosome"/>
</dbReference>
<dbReference type="GO" id="GO:0005737">
    <property type="term" value="C:cytoplasm"/>
    <property type="evidence" value="ECO:0007669"/>
    <property type="project" value="UniProtKB-SubCell"/>
</dbReference>
<dbReference type="GO" id="GO:0005524">
    <property type="term" value="F:ATP binding"/>
    <property type="evidence" value="ECO:0007669"/>
    <property type="project" value="UniProtKB-UniRule"/>
</dbReference>
<dbReference type="GO" id="GO:0004326">
    <property type="term" value="F:tetrahydrofolylpolyglutamate synthase activity"/>
    <property type="evidence" value="ECO:0007669"/>
    <property type="project" value="InterPro"/>
</dbReference>
<dbReference type="GO" id="GO:0008764">
    <property type="term" value="F:UDP-N-acetylmuramoylalanine-D-glutamate ligase activity"/>
    <property type="evidence" value="ECO:0007669"/>
    <property type="project" value="UniProtKB-UniRule"/>
</dbReference>
<dbReference type="GO" id="GO:0051301">
    <property type="term" value="P:cell division"/>
    <property type="evidence" value="ECO:0007669"/>
    <property type="project" value="UniProtKB-KW"/>
</dbReference>
<dbReference type="GO" id="GO:0071555">
    <property type="term" value="P:cell wall organization"/>
    <property type="evidence" value="ECO:0007669"/>
    <property type="project" value="UniProtKB-KW"/>
</dbReference>
<dbReference type="GO" id="GO:0009252">
    <property type="term" value="P:peptidoglycan biosynthetic process"/>
    <property type="evidence" value="ECO:0007669"/>
    <property type="project" value="UniProtKB-UniRule"/>
</dbReference>
<dbReference type="GO" id="GO:0008360">
    <property type="term" value="P:regulation of cell shape"/>
    <property type="evidence" value="ECO:0007669"/>
    <property type="project" value="UniProtKB-KW"/>
</dbReference>
<dbReference type="Gene3D" id="3.90.190.20">
    <property type="entry name" value="Mur ligase, C-terminal domain"/>
    <property type="match status" value="1"/>
</dbReference>
<dbReference type="Gene3D" id="3.40.1190.10">
    <property type="entry name" value="Mur-like, catalytic domain"/>
    <property type="match status" value="1"/>
</dbReference>
<dbReference type="Gene3D" id="3.40.50.720">
    <property type="entry name" value="NAD(P)-binding Rossmann-like Domain"/>
    <property type="match status" value="1"/>
</dbReference>
<dbReference type="HAMAP" id="MF_00639">
    <property type="entry name" value="MurD"/>
    <property type="match status" value="1"/>
</dbReference>
<dbReference type="InterPro" id="IPR018109">
    <property type="entry name" value="Folylpolyglutamate_synth_CS"/>
</dbReference>
<dbReference type="InterPro" id="IPR036565">
    <property type="entry name" value="Mur-like_cat_sf"/>
</dbReference>
<dbReference type="InterPro" id="IPR004101">
    <property type="entry name" value="Mur_ligase_C"/>
</dbReference>
<dbReference type="InterPro" id="IPR036615">
    <property type="entry name" value="Mur_ligase_C_dom_sf"/>
</dbReference>
<dbReference type="InterPro" id="IPR013221">
    <property type="entry name" value="Mur_ligase_cen"/>
</dbReference>
<dbReference type="InterPro" id="IPR005762">
    <property type="entry name" value="MurD"/>
</dbReference>
<dbReference type="NCBIfam" id="TIGR01087">
    <property type="entry name" value="murD"/>
    <property type="match status" value="1"/>
</dbReference>
<dbReference type="PANTHER" id="PTHR43692">
    <property type="entry name" value="UDP-N-ACETYLMURAMOYLALANINE--D-GLUTAMATE LIGASE"/>
    <property type="match status" value="1"/>
</dbReference>
<dbReference type="PANTHER" id="PTHR43692:SF1">
    <property type="entry name" value="UDP-N-ACETYLMURAMOYLALANINE--D-GLUTAMATE LIGASE"/>
    <property type="match status" value="1"/>
</dbReference>
<dbReference type="Pfam" id="PF02875">
    <property type="entry name" value="Mur_ligase_C"/>
    <property type="match status" value="1"/>
</dbReference>
<dbReference type="Pfam" id="PF08245">
    <property type="entry name" value="Mur_ligase_M"/>
    <property type="match status" value="1"/>
</dbReference>
<dbReference type="SUPFAM" id="SSF51984">
    <property type="entry name" value="MurCD N-terminal domain"/>
    <property type="match status" value="1"/>
</dbReference>
<dbReference type="SUPFAM" id="SSF53623">
    <property type="entry name" value="MurD-like peptide ligases, catalytic domain"/>
    <property type="match status" value="1"/>
</dbReference>
<dbReference type="SUPFAM" id="SSF53244">
    <property type="entry name" value="MurD-like peptide ligases, peptide-binding domain"/>
    <property type="match status" value="1"/>
</dbReference>
<proteinExistence type="inferred from homology"/>
<protein>
    <recommendedName>
        <fullName evidence="1">UDP-N-acetylmuramoylalanine--D-glutamate ligase</fullName>
        <ecNumber evidence="1">6.3.2.9</ecNumber>
    </recommendedName>
    <alternativeName>
        <fullName evidence="1">D-glutamic acid-adding enzyme</fullName>
    </alternativeName>
    <alternativeName>
        <fullName evidence="1">UDP-N-acetylmuramoyl-L-alanyl-D-glutamate synthetase</fullName>
    </alternativeName>
</protein>
<sequence length="466" mass="48759">MIPVTSFSGKTVAVFGLGGSGLASCHALKAGGAEVIAGDDNADNLAKAAQAGFITADLRTVVWANLAALVLAPGVPLTHPSPHWSVLAARQAGVEVIGDVELFCRERARHAPDAPFIAITGTNGKSTTTALVAHLMREAGYDVQMGGNIGTAILSLEPPRRGRVHVIEMSSYQIDLAPSLDPTVGILLNLSPDHLDRHGTIEHYAQVKERLIAGVQPQGTAVVGVDDHWCAAIADRQEQAGRSVVRVSVKRPLAHGVSVEQDRIVLVSGGARSEIADIGGIGSLRGRHNAQNAACASAGALALGVSRDILQQDLRSFPGLAHRMEQVGRKAHVLFVNDSKGTNADATEKALSSFDEIFWIAGGKPKSGGIASLDAFFPRIRKAYLIGEAAQEFAATLEGKVAYEISGTLEAAVPAAARDAEGAGRAGAVVLLSPACASFDQFRNFEVRGDRFRELVQALPGVTPVV</sequence>
<comment type="function">
    <text evidence="1">Cell wall formation. Catalyzes the addition of glutamate to the nucleotide precursor UDP-N-acetylmuramoyl-L-alanine (UMA).</text>
</comment>
<comment type="catalytic activity">
    <reaction evidence="1">
        <text>UDP-N-acetyl-alpha-D-muramoyl-L-alanine + D-glutamate + ATP = UDP-N-acetyl-alpha-D-muramoyl-L-alanyl-D-glutamate + ADP + phosphate + H(+)</text>
        <dbReference type="Rhea" id="RHEA:16429"/>
        <dbReference type="ChEBI" id="CHEBI:15378"/>
        <dbReference type="ChEBI" id="CHEBI:29986"/>
        <dbReference type="ChEBI" id="CHEBI:30616"/>
        <dbReference type="ChEBI" id="CHEBI:43474"/>
        <dbReference type="ChEBI" id="CHEBI:83898"/>
        <dbReference type="ChEBI" id="CHEBI:83900"/>
        <dbReference type="ChEBI" id="CHEBI:456216"/>
        <dbReference type="EC" id="6.3.2.9"/>
    </reaction>
</comment>
<comment type="pathway">
    <text evidence="1">Cell wall biogenesis; peptidoglycan biosynthesis.</text>
</comment>
<comment type="subcellular location">
    <subcellularLocation>
        <location evidence="1">Cytoplasm</location>
    </subcellularLocation>
</comment>
<comment type="similarity">
    <text evidence="1">Belongs to the MurCDEF family.</text>
</comment>
<organism>
    <name type="scientific">Nitrobacter winogradskyi (strain ATCC 25391 / DSM 10237 / CIP 104748 / NCIMB 11846 / Nb-255)</name>
    <dbReference type="NCBI Taxonomy" id="323098"/>
    <lineage>
        <taxon>Bacteria</taxon>
        <taxon>Pseudomonadati</taxon>
        <taxon>Pseudomonadota</taxon>
        <taxon>Alphaproteobacteria</taxon>
        <taxon>Hyphomicrobiales</taxon>
        <taxon>Nitrobacteraceae</taxon>
        <taxon>Nitrobacter</taxon>
    </lineage>
</organism>
<gene>
    <name evidence="1" type="primary">murD</name>
    <name type="ordered locus">Nwi_1049</name>
</gene>
<accession>Q3STT0</accession>